<name>YTJA_ECOBW</name>
<gene>
    <name evidence="1" type="primary">ytjA</name>
    <name type="ordered locus">BWG_4068</name>
</gene>
<sequence length="53" mass="5536">MFRWGIIFLVIALIAAALGFGGLAGTAAGAAKIVFVVGIILFLVSLFMGRKRP</sequence>
<dbReference type="EMBL" id="CP001396">
    <property type="protein sequence ID" value="ACR65049.1"/>
    <property type="molecule type" value="Genomic_DNA"/>
</dbReference>
<dbReference type="RefSeq" id="WP_000490275.1">
    <property type="nucleotide sequence ID" value="NC_012759.1"/>
</dbReference>
<dbReference type="KEGG" id="ebw:BWG_4068"/>
<dbReference type="HOGENOM" id="CLU_187346_2_0_6"/>
<dbReference type="GO" id="GO:0005886">
    <property type="term" value="C:plasma membrane"/>
    <property type="evidence" value="ECO:0007669"/>
    <property type="project" value="UniProtKB-SubCell"/>
</dbReference>
<dbReference type="HAMAP" id="MF_01361">
    <property type="entry name" value="UPF0391"/>
    <property type="match status" value="1"/>
</dbReference>
<dbReference type="InterPro" id="IPR009760">
    <property type="entry name" value="DUF1328"/>
</dbReference>
<dbReference type="NCBIfam" id="NF010229">
    <property type="entry name" value="PRK13682.1-4"/>
    <property type="match status" value="1"/>
</dbReference>
<dbReference type="NCBIfam" id="NF010230">
    <property type="entry name" value="PRK13682.1-5"/>
    <property type="match status" value="1"/>
</dbReference>
<dbReference type="Pfam" id="PF07043">
    <property type="entry name" value="DUF1328"/>
    <property type="match status" value="1"/>
</dbReference>
<dbReference type="PIRSF" id="PIRSF036466">
    <property type="entry name" value="UCP036466"/>
    <property type="match status" value="1"/>
</dbReference>
<feature type="chain" id="PRO_1000214874" description="UPF0391 membrane protein YtjA">
    <location>
        <begin position="1"/>
        <end position="53"/>
    </location>
</feature>
<feature type="transmembrane region" description="Helical" evidence="1">
    <location>
        <begin position="4"/>
        <end position="24"/>
    </location>
</feature>
<feature type="transmembrane region" description="Helical" evidence="1">
    <location>
        <begin position="30"/>
        <end position="48"/>
    </location>
</feature>
<proteinExistence type="inferred from homology"/>
<comment type="subcellular location">
    <subcellularLocation>
        <location evidence="1">Cell membrane</location>
        <topology evidence="1">Multi-pass membrane protein</topology>
    </subcellularLocation>
</comment>
<comment type="similarity">
    <text evidence="1">Belongs to the UPF0391 family.</text>
</comment>
<evidence type="ECO:0000255" key="1">
    <source>
        <dbReference type="HAMAP-Rule" id="MF_01361"/>
    </source>
</evidence>
<organism>
    <name type="scientific">Escherichia coli (strain K12 / MC4100 / BW2952)</name>
    <dbReference type="NCBI Taxonomy" id="595496"/>
    <lineage>
        <taxon>Bacteria</taxon>
        <taxon>Pseudomonadati</taxon>
        <taxon>Pseudomonadota</taxon>
        <taxon>Gammaproteobacteria</taxon>
        <taxon>Enterobacterales</taxon>
        <taxon>Enterobacteriaceae</taxon>
        <taxon>Escherichia</taxon>
    </lineage>
</organism>
<reference key="1">
    <citation type="journal article" date="2009" name="J. Bacteriol.">
        <title>Genomic sequencing reveals regulatory mutations and recombinational events in the widely used MC4100 lineage of Escherichia coli K-12.</title>
        <authorList>
            <person name="Ferenci T."/>
            <person name="Zhou Z."/>
            <person name="Betteridge T."/>
            <person name="Ren Y."/>
            <person name="Liu Y."/>
            <person name="Feng L."/>
            <person name="Reeves P.R."/>
            <person name="Wang L."/>
        </authorList>
    </citation>
    <scope>NUCLEOTIDE SEQUENCE [LARGE SCALE GENOMIC DNA]</scope>
    <source>
        <strain>K12 / MC4100 / BW2952</strain>
    </source>
</reference>
<protein>
    <recommendedName>
        <fullName evidence="1">UPF0391 membrane protein YtjA</fullName>
    </recommendedName>
</protein>
<keyword id="KW-1003">Cell membrane</keyword>
<keyword id="KW-0472">Membrane</keyword>
<keyword id="KW-0812">Transmembrane</keyword>
<keyword id="KW-1133">Transmembrane helix</keyword>
<accession>C4ZT58</accession>